<evidence type="ECO:0000269" key="1">
    <source>
    </source>
</evidence>
<evidence type="ECO:0000305" key="2"/>
<evidence type="ECO:0000305" key="3">
    <source>
    </source>
</evidence>
<reference key="1">
    <citation type="journal article" date="2006" name="Peptides">
        <title>Multiple bradykinin-related peptides from the capture web of the spider Nephila clavipes (Araneae, Tetragnatidae).</title>
        <authorList>
            <person name="Volsi E.C."/>
            <person name="Mendes M.A."/>
            <person name="Marques M.R."/>
            <person name="dos Santos L.D."/>
            <person name="Santos K.S."/>
            <person name="de Souza B.M."/>
            <person name="Babieri E.F."/>
            <person name="Palma M.S."/>
        </authorList>
    </citation>
    <scope>PROTEIN SEQUENCE</scope>
    <scope>IDENTIFICATION BY MASS SPECTROMETRY</scope>
    <scope>SYNTHESIS</scope>
    <scope>FUNCTION</scope>
    <scope>BIOASSAY</scope>
    <scope>TOXIC DOSE</scope>
    <scope>AMIDATION AT ARG-10</scope>
</reference>
<organism>
    <name type="scientific">Trichonephila clavipes</name>
    <name type="common">Golden silk orbweaver</name>
    <name type="synonym">Nephila clavipes</name>
    <dbReference type="NCBI Taxonomy" id="2585209"/>
    <lineage>
        <taxon>Eukaryota</taxon>
        <taxon>Metazoa</taxon>
        <taxon>Ecdysozoa</taxon>
        <taxon>Arthropoda</taxon>
        <taxon>Chelicerata</taxon>
        <taxon>Arachnida</taxon>
        <taxon>Araneae</taxon>
        <taxon>Araneomorphae</taxon>
        <taxon>Entelegynae</taxon>
        <taxon>Araneoidea</taxon>
        <taxon>Nephilidae</taxon>
        <taxon>Trichonephila</taxon>
    </lineage>
</organism>
<accession>P0DM74</accession>
<name>BRK3_TRICX</name>
<keyword id="KW-0027">Amidation</keyword>
<keyword id="KW-0903">Direct protein sequencing</keyword>
<keyword id="KW-1213">G-protein coupled receptor impairing toxin</keyword>
<keyword id="KW-0964">Secreted</keyword>
<keyword id="KW-0800">Toxin</keyword>
<feature type="peptide" id="PRO_0000424406" description="Nephilakinin-3">
    <location>
        <begin position="1"/>
        <end position="10"/>
    </location>
</feature>
<feature type="modified residue" description="Arginine amide" evidence="1">
    <location>
        <position position="10"/>
    </location>
</feature>
<dbReference type="GO" id="GO:0005576">
    <property type="term" value="C:extracellular region"/>
    <property type="evidence" value="ECO:0007669"/>
    <property type="project" value="UniProtKB-SubCell"/>
</dbReference>
<dbReference type="GO" id="GO:0090729">
    <property type="term" value="F:toxin activity"/>
    <property type="evidence" value="ECO:0007669"/>
    <property type="project" value="UniProtKB-KW"/>
</dbReference>
<sequence>PSPPGFSPFR</sequence>
<proteinExistence type="evidence at protein level"/>
<comment type="function">
    <text evidence="1">Causes constriction on isolated rat ileum preparations and relaxation on rat duodenum muscle preparations at amounts higher than bradykinin. Is a partial agonist bradykinin receptor B2 (BDKRB2). Has insecticidal properties. May be related to the predation of insects by the spider webs.</text>
</comment>
<comment type="subcellular location">
    <subcellularLocation>
        <location>Secreted</location>
    </subcellularLocation>
</comment>
<comment type="toxic dose">
    <text evidence="1">LD(50) is 70 pmoles/mg when injected into honeybees. Dose that causes muscle constriction (ED(50)) is 0.7 uM. Dose that causes muscle relaxation (ED(50)) is 1.0 uM.</text>
</comment>
<comment type="miscellaneous">
    <text evidence="3">Has been extracted from the spider web.</text>
</comment>
<comment type="miscellaneous">
    <text evidence="3">Negative results: does not target bradykinin receptor B1 (BDKRB1).</text>
</comment>
<comment type="similarity">
    <text evidence="2">Belongs to the bradykinin-related peptide family.</text>
</comment>
<protein>
    <recommendedName>
        <fullName>Nephilakinin-3</fullName>
    </recommendedName>
    <alternativeName>
        <fullName>Nephilakinin-III</fullName>
    </alternativeName>
</protein>